<protein>
    <recommendedName>
        <fullName evidence="8">3-hydroxy-3-methylglutaryl-coenzyme A reductase</fullName>
        <shortName evidence="8">HMG-CoA reductase</shortName>
        <ecNumber evidence="3">1.1.1.34</ecNumber>
    </recommendedName>
</protein>
<gene>
    <name type="primary">HMGR</name>
    <name evidence="8" type="synonym">HMGA</name>
    <name type="ORF">FFUJ_04000</name>
</gene>
<organism>
    <name type="scientific">Gibberella fujikuroi (strain CBS 195.34 / IMI 58289 / NRRL A-6831)</name>
    <name type="common">Bakanae and foot rot disease fungus</name>
    <name type="synonym">Fusarium fujikuroi</name>
    <dbReference type="NCBI Taxonomy" id="1279085"/>
    <lineage>
        <taxon>Eukaryota</taxon>
        <taxon>Fungi</taxon>
        <taxon>Dikarya</taxon>
        <taxon>Ascomycota</taxon>
        <taxon>Pezizomycotina</taxon>
        <taxon>Sordariomycetes</taxon>
        <taxon>Hypocreomycetidae</taxon>
        <taxon>Hypocreales</taxon>
        <taxon>Nectriaceae</taxon>
        <taxon>Fusarium</taxon>
        <taxon>Fusarium fujikuroi species complex</taxon>
    </lineage>
</organism>
<keyword id="KW-0256">Endoplasmic reticulum</keyword>
<keyword id="KW-0444">Lipid biosynthesis</keyword>
<keyword id="KW-0443">Lipid metabolism</keyword>
<keyword id="KW-0472">Membrane</keyword>
<keyword id="KW-0521">NADP</keyword>
<keyword id="KW-0560">Oxidoreductase</keyword>
<keyword id="KW-1185">Reference proteome</keyword>
<keyword id="KW-0752">Steroid biosynthesis</keyword>
<keyword id="KW-0753">Steroid metabolism</keyword>
<keyword id="KW-0756">Sterol biosynthesis</keyword>
<keyword id="KW-1207">Sterol metabolism</keyword>
<keyword id="KW-0812">Transmembrane</keyword>
<keyword id="KW-1133">Transmembrane helix</keyword>
<reference key="1">
    <citation type="journal article" date="2013" name="PLoS Pathog.">
        <title>Deciphering the cryptic genome: genome-wide analyses of the rice pathogen Fusarium fujikuroi reveal complex regulation of secondary metabolism and novel metabolites.</title>
        <authorList>
            <person name="Wiemann P."/>
            <person name="Sieber C.M.K."/>
            <person name="von Bargen K.W."/>
            <person name="Studt L."/>
            <person name="Niehaus E.-M."/>
            <person name="Espino J.J."/>
            <person name="Huss K."/>
            <person name="Michielse C.B."/>
            <person name="Albermann S."/>
            <person name="Wagner D."/>
            <person name="Bergner S.V."/>
            <person name="Connolly L.R."/>
            <person name="Fischer A."/>
            <person name="Reuter G."/>
            <person name="Kleigrewe K."/>
            <person name="Bald T."/>
            <person name="Wingfield B.D."/>
            <person name="Ophir R."/>
            <person name="Freeman S."/>
            <person name="Hippler M."/>
            <person name="Smith K.M."/>
            <person name="Brown D.W."/>
            <person name="Proctor R.H."/>
            <person name="Muensterkoetter M."/>
            <person name="Freitag M."/>
            <person name="Humpf H.-U."/>
            <person name="Gueldener U."/>
            <person name="Tudzynski B."/>
        </authorList>
    </citation>
    <scope>NUCLEOTIDE SEQUENCE [LARGE SCALE GENOMIC DNA]</scope>
    <source>
        <strain>CBS 195.34 / IMI 58289 / NRRL A-6831</strain>
    </source>
</reference>
<reference key="2">
    <citation type="journal article" date="1992" name="Exp. Mycol.">
        <title>Cloning a segment of the gene encoding 3-hydroxy-3-methyglutaryl coenzyme A reductase in Phycomyces blakesleeanus and Gibberella fujikuroi by the polymerase chain reaction.</title>
        <authorList>
            <person name="Corrochano L.M."/>
            <person name="Avalos J."/>
        </authorList>
    </citation>
    <scope>NUCLEOTIDE SEQUENCE [GENOMIC DNA] OF 823-928</scope>
    <source>
        <strain>CBS 195.34 / IMI 58289 / NRRL A-6831</strain>
    </source>
</reference>
<evidence type="ECO:0000250" key="1">
    <source>
        <dbReference type="UniProtKB" id="P04035"/>
    </source>
</evidence>
<evidence type="ECO:0000250" key="2">
    <source>
        <dbReference type="UniProtKB" id="P12684"/>
    </source>
</evidence>
<evidence type="ECO:0000250" key="3">
    <source>
        <dbReference type="UniProtKB" id="Q4WHZ1"/>
    </source>
</evidence>
<evidence type="ECO:0000255" key="4"/>
<evidence type="ECO:0000255" key="5">
    <source>
        <dbReference type="PROSITE-ProRule" id="PRU00199"/>
    </source>
</evidence>
<evidence type="ECO:0000255" key="6">
    <source>
        <dbReference type="PROSITE-ProRule" id="PRU10003"/>
    </source>
</evidence>
<evidence type="ECO:0000256" key="7">
    <source>
        <dbReference type="SAM" id="MobiDB-lite"/>
    </source>
</evidence>
<evidence type="ECO:0000303" key="8">
    <source ref="2"/>
</evidence>
<evidence type="ECO:0000305" key="9"/>
<accession>S0DQM8</accession>
<accession>Q12577</accession>
<accession>Q12615</accession>
<proteinExistence type="inferred from homology"/>
<feature type="chain" id="PRO_0000424592" description="3-hydroxy-3-methylglutaryl-coenzyme A reductase">
    <location>
        <begin position="1"/>
        <end position="1183"/>
    </location>
</feature>
<feature type="topological domain" description="Cytoplasmic" evidence="2">
    <location>
        <begin position="1"/>
        <end position="245"/>
    </location>
</feature>
<feature type="transmembrane region" description="Helical" evidence="4">
    <location>
        <begin position="246"/>
        <end position="266"/>
    </location>
</feature>
<feature type="topological domain" description="Lumenal" evidence="2">
    <location>
        <begin position="267"/>
        <end position="273"/>
    </location>
</feature>
<feature type="transmembrane region" description="Helical" evidence="4">
    <location>
        <begin position="274"/>
        <end position="294"/>
    </location>
</feature>
<feature type="topological domain" description="Cytoplasmic" evidence="2">
    <location>
        <begin position="295"/>
        <end position="299"/>
    </location>
</feature>
<feature type="transmembrane region" description="Helical" evidence="4">
    <location>
        <begin position="300"/>
        <end position="320"/>
    </location>
</feature>
<feature type="topological domain" description="Lumenal" evidence="2">
    <location>
        <begin position="321"/>
        <end position="378"/>
    </location>
</feature>
<feature type="transmembrane region" description="Helical" evidence="4">
    <location>
        <begin position="379"/>
        <end position="399"/>
    </location>
</feature>
<feature type="topological domain" description="Cytoplasmic" evidence="2">
    <location>
        <begin position="400"/>
        <end position="402"/>
    </location>
</feature>
<feature type="transmembrane region" description="Helical" evidence="4">
    <location>
        <begin position="403"/>
        <end position="423"/>
    </location>
</feature>
<feature type="topological domain" description="Lumenal" evidence="2">
    <location>
        <begin position="424"/>
        <end position="482"/>
    </location>
</feature>
<feature type="transmembrane region" description="Helical" evidence="4">
    <location>
        <begin position="483"/>
        <end position="503"/>
    </location>
</feature>
<feature type="topological domain" description="Cytoplasmic" evidence="2">
    <location>
        <begin position="504"/>
        <end position="1183"/>
    </location>
</feature>
<feature type="domain" description="SSD" evidence="5">
    <location>
        <begin position="245"/>
        <end position="426"/>
    </location>
</feature>
<feature type="region of interest" description="Disordered" evidence="7">
    <location>
        <begin position="1136"/>
        <end position="1183"/>
    </location>
</feature>
<feature type="compositionally biased region" description="Low complexity" evidence="7">
    <location>
        <begin position="1139"/>
        <end position="1148"/>
    </location>
</feature>
<feature type="compositionally biased region" description="Low complexity" evidence="7">
    <location>
        <begin position="1167"/>
        <end position="1177"/>
    </location>
</feature>
<feature type="active site" description="Charge relay system" evidence="1">
    <location>
        <position position="828"/>
    </location>
</feature>
<feature type="active site" description="Charge relay system" evidence="1">
    <location>
        <position position="962"/>
    </location>
</feature>
<feature type="active site" description="Charge relay system" evidence="1">
    <location>
        <position position="1038"/>
    </location>
</feature>
<feature type="active site" description="Proton donor" evidence="6">
    <location>
        <position position="1134"/>
    </location>
</feature>
<feature type="binding site" evidence="1">
    <location>
        <begin position="834"/>
        <end position="840"/>
    </location>
    <ligand>
        <name>CoA</name>
        <dbReference type="ChEBI" id="CHEBI:57287"/>
    </ligand>
</feature>
<feature type="binding site" evidence="1">
    <location>
        <begin position="895"/>
        <end position="897"/>
    </location>
    <ligand>
        <name>NADP(+)</name>
        <dbReference type="ChEBI" id="CHEBI:58349"/>
    </ligand>
</feature>
<feature type="binding site" evidence="1">
    <location>
        <begin position="922"/>
        <end position="930"/>
    </location>
    <ligand>
        <name>NADP(+)</name>
        <dbReference type="ChEBI" id="CHEBI:58349"/>
    </ligand>
</feature>
<feature type="binding site" evidence="1">
    <location>
        <begin position="991"/>
        <end position="993"/>
    </location>
    <ligand>
        <name>CoA</name>
        <dbReference type="ChEBI" id="CHEBI:57287"/>
    </ligand>
</feature>
<feature type="binding site" evidence="1">
    <location>
        <begin position="1133"/>
        <end position="1134"/>
    </location>
    <ligand>
        <name>CoA</name>
        <dbReference type="ChEBI" id="CHEBI:57287"/>
    </ligand>
</feature>
<feature type="binding site" evidence="1">
    <location>
        <begin position="1138"/>
        <end position="1139"/>
    </location>
    <ligand>
        <name>NADP(+)</name>
        <dbReference type="ChEBI" id="CHEBI:58349"/>
    </ligand>
</feature>
<feature type="sequence conflict" description="In Ref. 2; CAA41261." evidence="9" ref="2">
    <original>R</original>
    <variation>S</variation>
    <location>
        <position position="896"/>
    </location>
</feature>
<comment type="function">
    <text evidence="3">HMG-CoA reductase; part of the first module of ergosterol biosynthesis pathway that includes the early steps of the pathway, conserved across all eukaryotes, and which results in the formation of mevalonate from acetyl-coenzyme A (acetyl-CoA) (By similarity). In this module, the cytosolic acetyl-CoA acetyltransferase catalyzes the formation of acetoacetyl-CoA (By similarity). The hydroxymethylglutaryl-CoA synthase then condenses acetyl-CoA with acetoacetyl-CoA to form HMG-CoA (By similarity). The rate-limiting step of the early module is the reduction to mevalonate by the 3-hydroxy-3-methylglutaryl-coenzyme A (HMG-CoA) reductase HMGR (By similarity).</text>
</comment>
<comment type="catalytic activity">
    <reaction evidence="6">
        <text>(R)-mevalonate + 2 NADP(+) + CoA = (3S)-3-hydroxy-3-methylglutaryl-CoA + 2 NADPH + 2 H(+)</text>
        <dbReference type="Rhea" id="RHEA:15989"/>
        <dbReference type="ChEBI" id="CHEBI:15378"/>
        <dbReference type="ChEBI" id="CHEBI:36464"/>
        <dbReference type="ChEBI" id="CHEBI:43074"/>
        <dbReference type="ChEBI" id="CHEBI:57287"/>
        <dbReference type="ChEBI" id="CHEBI:57783"/>
        <dbReference type="ChEBI" id="CHEBI:58349"/>
        <dbReference type="EC" id="1.1.1.34"/>
    </reaction>
</comment>
<comment type="pathway">
    <text evidence="3">Metabolic intermediate biosynthesis; (R)-mevalonate biosynthesis; (R)-mevalonate from acetyl-CoA: step 3/3.</text>
</comment>
<comment type="subcellular location">
    <subcellularLocation>
        <location evidence="9">Endoplasmic reticulum membrane</location>
        <topology evidence="4">Multi-pass membrane protein</topology>
    </subcellularLocation>
</comment>
<comment type="similarity">
    <text evidence="9">Belongs to the HMG-CoA reductase family.</text>
</comment>
<dbReference type="EC" id="1.1.1.34" evidence="3"/>
<dbReference type="EMBL" id="HF679024">
    <property type="protein sequence ID" value="CCT64750.1"/>
    <property type="molecule type" value="Genomic_DNA"/>
</dbReference>
<dbReference type="EMBL" id="X58370">
    <property type="protein sequence ID" value="CAA41261.1"/>
    <property type="molecule type" value="Genomic_DNA"/>
</dbReference>
<dbReference type="PIR" id="S17343">
    <property type="entry name" value="S17343"/>
</dbReference>
<dbReference type="SMR" id="S0DQM8"/>
<dbReference type="STRING" id="1279085.S0DQM8"/>
<dbReference type="EnsemblFungi" id="CCT64750">
    <property type="protein sequence ID" value="CCT64750"/>
    <property type="gene ID" value="FFUJ_04000"/>
</dbReference>
<dbReference type="VEuPathDB" id="FungiDB:FFUJ_04000"/>
<dbReference type="HOGENOM" id="CLU_001734_0_0_1"/>
<dbReference type="UniPathway" id="UPA00058">
    <property type="reaction ID" value="UER00103"/>
</dbReference>
<dbReference type="Proteomes" id="UP000016800">
    <property type="component" value="Chromosome 2"/>
</dbReference>
<dbReference type="GO" id="GO:0005789">
    <property type="term" value="C:endoplasmic reticulum membrane"/>
    <property type="evidence" value="ECO:0007669"/>
    <property type="project" value="UniProtKB-SubCell"/>
</dbReference>
<dbReference type="GO" id="GO:0005778">
    <property type="term" value="C:peroxisomal membrane"/>
    <property type="evidence" value="ECO:0007669"/>
    <property type="project" value="TreeGrafter"/>
</dbReference>
<dbReference type="GO" id="GO:0004420">
    <property type="term" value="F:hydroxymethylglutaryl-CoA reductase (NADPH) activity"/>
    <property type="evidence" value="ECO:0007669"/>
    <property type="project" value="UniProtKB-EC"/>
</dbReference>
<dbReference type="GO" id="GO:0015936">
    <property type="term" value="P:coenzyme A metabolic process"/>
    <property type="evidence" value="ECO:0007669"/>
    <property type="project" value="InterPro"/>
</dbReference>
<dbReference type="GO" id="GO:0006696">
    <property type="term" value="P:ergosterol biosynthetic process"/>
    <property type="evidence" value="ECO:0007669"/>
    <property type="project" value="TreeGrafter"/>
</dbReference>
<dbReference type="GO" id="GO:0008299">
    <property type="term" value="P:isoprenoid biosynthetic process"/>
    <property type="evidence" value="ECO:0007669"/>
    <property type="project" value="InterPro"/>
</dbReference>
<dbReference type="CDD" id="cd00643">
    <property type="entry name" value="HMG-CoA_reductase_classI"/>
    <property type="match status" value="1"/>
</dbReference>
<dbReference type="FunFam" id="1.10.3270.10:FF:000001">
    <property type="entry name" value="3-hydroxy-3-methylglutaryl coenzyme A reductase"/>
    <property type="match status" value="1"/>
</dbReference>
<dbReference type="FunFam" id="3.30.70.420:FF:000001">
    <property type="entry name" value="3-hydroxy-3-methylglutaryl coenzyme A reductase"/>
    <property type="match status" value="1"/>
</dbReference>
<dbReference type="FunFam" id="3.90.770.10:FF:000001">
    <property type="entry name" value="3-hydroxy-3-methylglutaryl coenzyme A reductase"/>
    <property type="match status" value="1"/>
</dbReference>
<dbReference type="Gene3D" id="3.90.770.10">
    <property type="entry name" value="3-hydroxy-3-methylglutaryl-coenzyme A Reductase, Chain A, domain 2"/>
    <property type="match status" value="1"/>
</dbReference>
<dbReference type="Gene3D" id="1.10.3270.10">
    <property type="entry name" value="HMGR, N-terminal domain"/>
    <property type="match status" value="1"/>
</dbReference>
<dbReference type="Gene3D" id="3.30.70.420">
    <property type="entry name" value="Hydroxymethylglutaryl-CoA reductase, class I/II, NAD/NADP-binding domain"/>
    <property type="match status" value="1"/>
</dbReference>
<dbReference type="InterPro" id="IPR025583">
    <property type="entry name" value="HMG-CoA_N_dom"/>
</dbReference>
<dbReference type="InterPro" id="IPR002202">
    <property type="entry name" value="HMG_CoA_Rdtase"/>
</dbReference>
<dbReference type="InterPro" id="IPR023074">
    <property type="entry name" value="HMG_CoA_Rdtase_cat_sf"/>
</dbReference>
<dbReference type="InterPro" id="IPR023076">
    <property type="entry name" value="HMG_CoA_Rdtase_CS"/>
</dbReference>
<dbReference type="InterPro" id="IPR004554">
    <property type="entry name" value="HMG_CoA_Rdtase_eu_arc"/>
</dbReference>
<dbReference type="InterPro" id="IPR023282">
    <property type="entry name" value="HMG_CoA_Rdtase_N"/>
</dbReference>
<dbReference type="InterPro" id="IPR009023">
    <property type="entry name" value="HMG_CoA_Rdtase_NAD(P)-bd_sf"/>
</dbReference>
<dbReference type="InterPro" id="IPR009029">
    <property type="entry name" value="HMG_CoA_Rdtase_sub-bd_dom_sf"/>
</dbReference>
<dbReference type="InterPro" id="IPR053958">
    <property type="entry name" value="HMGCR/SNAP/NPC1-like_SSD"/>
</dbReference>
<dbReference type="InterPro" id="IPR000731">
    <property type="entry name" value="SSD"/>
</dbReference>
<dbReference type="NCBIfam" id="TIGR00533">
    <property type="entry name" value="HMG_CoA_R_NADP"/>
    <property type="match status" value="1"/>
</dbReference>
<dbReference type="PANTHER" id="PTHR10572">
    <property type="entry name" value="3-HYDROXY-3-METHYLGLUTARYL-COENZYME A REDUCTASE"/>
    <property type="match status" value="1"/>
</dbReference>
<dbReference type="PANTHER" id="PTHR10572:SF24">
    <property type="entry name" value="3-HYDROXY-3-METHYLGLUTARYL-COENZYME A REDUCTASE"/>
    <property type="match status" value="1"/>
</dbReference>
<dbReference type="Pfam" id="PF00368">
    <property type="entry name" value="HMG-CoA_red"/>
    <property type="match status" value="1"/>
</dbReference>
<dbReference type="Pfam" id="PF13323">
    <property type="entry name" value="HPIH"/>
    <property type="match status" value="1"/>
</dbReference>
<dbReference type="Pfam" id="PF12349">
    <property type="entry name" value="Sterol-sensing"/>
    <property type="match status" value="1"/>
</dbReference>
<dbReference type="PRINTS" id="PR00071">
    <property type="entry name" value="HMGCOARDTASE"/>
</dbReference>
<dbReference type="SUPFAM" id="SSF55035">
    <property type="entry name" value="NAD-binding domain of HMG-CoA reductase"/>
    <property type="match status" value="1"/>
</dbReference>
<dbReference type="SUPFAM" id="SSF56542">
    <property type="entry name" value="Substrate-binding domain of HMG-CoA reductase"/>
    <property type="match status" value="1"/>
</dbReference>
<dbReference type="PROSITE" id="PS00066">
    <property type="entry name" value="HMG_COA_REDUCTASE_1"/>
    <property type="match status" value="1"/>
</dbReference>
<dbReference type="PROSITE" id="PS00318">
    <property type="entry name" value="HMG_COA_REDUCTASE_2"/>
    <property type="match status" value="1"/>
</dbReference>
<dbReference type="PROSITE" id="PS01192">
    <property type="entry name" value="HMG_COA_REDUCTASE_3"/>
    <property type="match status" value="1"/>
</dbReference>
<dbReference type="PROSITE" id="PS50065">
    <property type="entry name" value="HMG_COA_REDUCTASE_4"/>
    <property type="match status" value="1"/>
</dbReference>
<dbReference type="PROSITE" id="PS50156">
    <property type="entry name" value="SSD"/>
    <property type="match status" value="1"/>
</dbReference>
<sequence length="1183" mass="127666">MAAILLPQRFRGEAPVTEKTTPSWASKRLTPIAQFLSRLACSHPIHTVVVVAVLASTSYVGLLQESLFNTDVESATLGKADWSTLVEGSRVLRAGPETAWNWKAVEQDVVADAGSDADHLALLTLVFPDSLSAESSSTAPRSHHVPIPQNLSITSLPSTENPFTAYSQDSILAYALPYSEGPEFLAAAQEIPNEDAVEIETKHGREKKTWIMKAAKVNTRNSVVQWVSNAWSEFLDLLKNAETLDIVIMLLGYIAMHLTFVSLFLSMRKMGSKFWLGICTLFSSVFAFLFGLVVTTKLGVPISVILLSEGLPFLVVTIGFEKNIVLTRAVMSHAIEHRRIQAQNSKSGKRSPERSTQNMIQYAVQAAIKEKGFEIIRDYAIEIVILVIGAASGVQGGLQQFCFLAAWTLFFDFILLFTFYTAILSIKLEINRIKRHVDMRMALEDDGVSRRVAENVAKGDDELNRVRGDAPLFGRKSSSIPKFKVLMILGFIFVNIVNICSIPFRNPSSMSTIRTWASSLGGVIAPLSVDPFKVASNGLDAILATAKSNNRPTLVTVLTPIKYELEYPSIHYALGSAASNPAYNDAFHHHFQGYGVGGRMVGGILKSLEDPVLSKWIVIALALSVALNGYLFNVARWGIKDPNVPEHNIDRNELARAQQFNDTGSATLPLGEYVPPTPMRTQPSTPAITDDEAEGLHMTKARPANLPNRSNEELEKLLSEKRVREMTDEEVISLSMRGKIPGYALEKTLGDFTRAVKIRRSIIARNKATTDITHSLDRSKLPYENYNWERVFGACCENVIGYMPLPVGVAGPLVIDGQSYFIPMATTEGVLVASASRGCKAINSGGGAITVLTADGMTRGPCVAFETLERAGAAKLWLDSEAGQDMMKKAFNSTSRFARLQSMKTALAGTNLYIRFKTTTGDAMGMNMISKGVEHALSVMANDGGFDDMQIISVSGNYCTDKKAAALNWIDGRGKGVVAEAIIPGEVVRSVLKSDVDSLVELNVAKNLIGSAMAGSVGGFNAHAANIVAAIFLATGQDPAQVVESANCITIMKNLNGALQISVSMPSLEVGTLGGGTILEPQGAMLDILGVRGSHPTNPGDNARRLARIIGAAVLAGELSLCSALAAGHLVRAHMQHNRSAAPSRSTTPAPPMTPVSLAMTSAQERSASTTSMSAAAIQRSKR</sequence>
<name>HMDH_GIBF5</name>